<sequence length="629" mass="70887">MWNVDVTCIGGIRSGEATLRPGPNIVQASNFQGKSSFLAAIQTAIGTTGLLTEDHPLMENEDDGKVTLETDEETYTVSLTRATDSDEPAISRSGTPYLTRDQDQIAARLFAVLGEDNPIRAAVREENQERLTELLKKPLETENIDLRIEALQREIKELEDEVAAAEAASADLPAAQQKVTRLQGELRDLNETRDELERKVDEETDQRALRDELTAKQSDLEREEARLERLENQVDRRKAQLDDKEAALESLDIPDSPTAEADIAEKQTRIDELAVKIDLLDDLHRSTKAIIDEGEIDLITDVERTLSGDTFSCFVCGAETTAEAVTERLNEISDRQESLREQRATLTEEVTQMQQRTREIESKRQQKAELEDEIKRLRVDIQEDQHEVRSIEATIEELQAEIEQREAEYEAAEKAGESHSAELKTIQQKIGSTETKLDRAQAELERIEAELQKRNDRQEQLETKRDELETLRQRRKQKYNELVNQFDAAMADIIGRFAPGFDGAYLDQKTDANDTVGFEINLARDGHTTDLDTLSEGERELVGIVTALAGYRTFSVGDRVPCILLDGIGQLAAEHIRHMIEYLENTAEILVTTAYPEAGSFDGETVSPEHWDVISHETAQSRDHPQITN</sequence>
<gene>
    <name type="primary">sph1</name>
    <name type="ordered locus">OE_5212F</name>
</gene>
<feature type="chain" id="PRO_0000409226" description="Smc-like protein Sph1">
    <location>
        <begin position="1"/>
        <end position="629"/>
    </location>
</feature>
<feature type="coiled-coil region" evidence="2">
    <location>
        <begin position="139"/>
        <end position="282"/>
    </location>
</feature>
<feature type="coiled-coil region" evidence="2">
    <location>
        <begin position="318"/>
        <end position="487"/>
    </location>
</feature>
<organism>
    <name type="scientific">Halobacterium salinarum (strain ATCC 29341 / DSM 671 / R1)</name>
    <dbReference type="NCBI Taxonomy" id="478009"/>
    <lineage>
        <taxon>Archaea</taxon>
        <taxon>Methanobacteriati</taxon>
        <taxon>Methanobacteriota</taxon>
        <taxon>Stenosarchaea group</taxon>
        <taxon>Halobacteria</taxon>
        <taxon>Halobacteriales</taxon>
        <taxon>Halobacteriaceae</taxon>
        <taxon>Halobacterium</taxon>
        <taxon>Halobacterium salinarum NRC-34001</taxon>
    </lineage>
</organism>
<evidence type="ECO:0000250" key="1"/>
<evidence type="ECO:0000255" key="2"/>
<evidence type="ECO:0000305" key="3"/>
<protein>
    <recommendedName>
        <fullName>Smc-like protein Sph1</fullName>
    </recommendedName>
</protein>
<dbReference type="EMBL" id="AM774418">
    <property type="protein sequence ID" value="CAP15560.1"/>
    <property type="molecule type" value="Genomic_DNA"/>
</dbReference>
<dbReference type="RefSeq" id="WP_010904164.1">
    <property type="nucleotide sequence ID" value="NC_010368.1"/>
</dbReference>
<dbReference type="SMR" id="B0R9X9"/>
<dbReference type="EnsemblBacteria" id="CAP15560">
    <property type="protein sequence ID" value="CAP15560"/>
    <property type="gene ID" value="OE_5212F"/>
</dbReference>
<dbReference type="GeneID" id="68695255"/>
<dbReference type="KEGG" id="hsl:OE_5212F"/>
<dbReference type="HOGENOM" id="CLU_434529_0_0_2"/>
<dbReference type="PhylomeDB" id="B0R9X9"/>
<dbReference type="Proteomes" id="UP000001321">
    <property type="component" value="Plasmid PHS3"/>
</dbReference>
<dbReference type="GO" id="GO:0005737">
    <property type="term" value="C:cytoplasm"/>
    <property type="evidence" value="ECO:0007669"/>
    <property type="project" value="UniProtKB-SubCell"/>
</dbReference>
<dbReference type="Gene3D" id="3.40.50.300">
    <property type="entry name" value="P-loop containing nucleotide triphosphate hydrolases"/>
    <property type="match status" value="2"/>
</dbReference>
<dbReference type="InterPro" id="IPR027417">
    <property type="entry name" value="P-loop_NTPase"/>
</dbReference>
<dbReference type="NCBIfam" id="NF045487">
    <property type="entry name" value="ASRP"/>
    <property type="match status" value="1"/>
</dbReference>
<dbReference type="PANTHER" id="PTHR32114">
    <property type="entry name" value="ABC TRANSPORTER ABCH.3"/>
    <property type="match status" value="1"/>
</dbReference>
<dbReference type="PANTHER" id="PTHR32114:SF2">
    <property type="entry name" value="ABC TRANSPORTER ABCH.3"/>
    <property type="match status" value="1"/>
</dbReference>
<dbReference type="SUPFAM" id="SSF52540">
    <property type="entry name" value="P-loop containing nucleoside triphosphate hydrolases"/>
    <property type="match status" value="1"/>
</dbReference>
<dbReference type="SUPFAM" id="SSF57997">
    <property type="entry name" value="Tropomyosin"/>
    <property type="match status" value="1"/>
</dbReference>
<geneLocation type="plasmid">
    <name>PHS3</name>
</geneLocation>
<accession>B0R9X9</accession>
<comment type="function">
    <text evidence="1">May play a role in a late step of replication.</text>
</comment>
<comment type="subcellular location">
    <subcellularLocation>
        <location evidence="1">Cytoplasm</location>
    </subcellularLocation>
</comment>
<comment type="similarity">
    <text evidence="3">Belongs to the Sph1/Sph2 family.</text>
</comment>
<proteinExistence type="inferred from homology"/>
<keyword id="KW-0175">Coiled coil</keyword>
<keyword id="KW-0963">Cytoplasm</keyword>
<keyword id="KW-0614">Plasmid</keyword>
<name>SPH1_HALS3</name>
<reference key="1">
    <citation type="journal article" date="2008" name="Genomics">
        <title>Evolution in the laboratory: the genome of Halobacterium salinarum strain R1 compared to that of strain NRC-1.</title>
        <authorList>
            <person name="Pfeiffer F."/>
            <person name="Schuster S.C."/>
            <person name="Broicher A."/>
            <person name="Falb M."/>
            <person name="Palm P."/>
            <person name="Rodewald K."/>
            <person name="Ruepp A."/>
            <person name="Soppa J."/>
            <person name="Tittor J."/>
            <person name="Oesterhelt D."/>
        </authorList>
    </citation>
    <scope>NUCLEOTIDE SEQUENCE [LARGE SCALE GENOMIC DNA]</scope>
    <source>
        <strain>ATCC 29341 / DSM 671 / R1</strain>
    </source>
</reference>